<evidence type="ECO:0000255" key="1">
    <source>
        <dbReference type="PROSITE-ProRule" id="PRU00108"/>
    </source>
</evidence>
<evidence type="ECO:0000269" key="2">
    <source>
    </source>
</evidence>
<evidence type="ECO:0000305" key="3"/>
<sequence>MMTVDPIQDLRNICLQILQSVNSNTLLEEETWDYNTLINNIDLPKQTREALRRSASQYLLYCQRKNKTYTTRKPLPAKAKLQLVETFSKKRYLTRCEKHQLAVQCGITTNQVQIWFANRRKRSKDLNNRD</sequence>
<feature type="chain" id="PRO_0000049174" description="Mating-type-like protein A1">
    <location>
        <begin position="1"/>
        <end position="130"/>
    </location>
</feature>
<feature type="DNA-binding region" description="Homeobox" evidence="1">
    <location>
        <begin position="68"/>
        <end position="127"/>
    </location>
</feature>
<protein>
    <recommendedName>
        <fullName>Mating-type-like protein A1</fullName>
    </recommendedName>
    <alternativeName>
        <fullName>MTL1a1 protein</fullName>
    </alternativeName>
</protein>
<proteinExistence type="evidence at transcript level"/>
<organism>
    <name type="scientific">Candida glabrata (strain ATCC 2001 / BCRC 20586 / JCM 3761 / NBRC 0622 / NRRL Y-65 / CBS 138)</name>
    <name type="common">Yeast</name>
    <name type="synonym">Nakaseomyces glabratus</name>
    <dbReference type="NCBI Taxonomy" id="284593"/>
    <lineage>
        <taxon>Eukaryota</taxon>
        <taxon>Fungi</taxon>
        <taxon>Dikarya</taxon>
        <taxon>Ascomycota</taxon>
        <taxon>Saccharomycotina</taxon>
        <taxon>Saccharomycetes</taxon>
        <taxon>Saccharomycetales</taxon>
        <taxon>Saccharomycetaceae</taxon>
        <taxon>Nakaseomyces</taxon>
    </lineage>
</organism>
<gene>
    <name type="primary">MTL1A1</name>
</gene>
<gene>
    <name type="primary">MTL2A1</name>
    <name type="ordered locus">CAGL0E00341g</name>
</gene>
<reference key="1">
    <citation type="journal article" date="2003" name="Eukaryot. Cell">
        <title>Three mating type-like loci in Candida glabrata.</title>
        <authorList>
            <person name="Srikantha T."/>
            <person name="Lachke S.A."/>
            <person name="Soll D.R."/>
        </authorList>
    </citation>
    <scope>NUCLEOTIDE SEQUENCE [GENOMIC DNA]</scope>
    <source>
        <strain>7549</strain>
    </source>
</reference>
<reference key="2">
    <citation type="journal article" date="2004" name="Proc. Natl. Acad. Sci. U.S.A.">
        <title>Evolution of the MAT locus and its Ho endonuclease in yeast species.</title>
        <authorList>
            <person name="Butler G."/>
            <person name="Kenny C."/>
            <person name="Fagan A."/>
            <person name="Kurischko C."/>
            <person name="Gaillardin C."/>
            <person name="Wolfe K.H."/>
        </authorList>
    </citation>
    <scope>NUCLEOTIDE SEQUENCE [GENOMIC DNA]</scope>
    <source>
        <strain>ATCC 2001 / BCRC 20586 / JCM 3761 / NBRC 0622 / NRRL Y-65 / CBS 138</strain>
    </source>
</reference>
<reference key="3">
    <citation type="journal article" date="2004" name="Nature">
        <title>Genome evolution in yeasts.</title>
        <authorList>
            <person name="Dujon B."/>
            <person name="Sherman D."/>
            <person name="Fischer G."/>
            <person name="Durrens P."/>
            <person name="Casaregola S."/>
            <person name="Lafontaine I."/>
            <person name="de Montigny J."/>
            <person name="Marck C."/>
            <person name="Neuveglise C."/>
            <person name="Talla E."/>
            <person name="Goffard N."/>
            <person name="Frangeul L."/>
            <person name="Aigle M."/>
            <person name="Anthouard V."/>
            <person name="Babour A."/>
            <person name="Barbe V."/>
            <person name="Barnay S."/>
            <person name="Blanchin S."/>
            <person name="Beckerich J.-M."/>
            <person name="Beyne E."/>
            <person name="Bleykasten C."/>
            <person name="Boisrame A."/>
            <person name="Boyer J."/>
            <person name="Cattolico L."/>
            <person name="Confanioleri F."/>
            <person name="de Daruvar A."/>
            <person name="Despons L."/>
            <person name="Fabre E."/>
            <person name="Fairhead C."/>
            <person name="Ferry-Dumazet H."/>
            <person name="Groppi A."/>
            <person name="Hantraye F."/>
            <person name="Hennequin C."/>
            <person name="Jauniaux N."/>
            <person name="Joyet P."/>
            <person name="Kachouri R."/>
            <person name="Kerrest A."/>
            <person name="Koszul R."/>
            <person name="Lemaire M."/>
            <person name="Lesur I."/>
            <person name="Ma L."/>
            <person name="Muller H."/>
            <person name="Nicaud J.-M."/>
            <person name="Nikolski M."/>
            <person name="Oztas S."/>
            <person name="Ozier-Kalogeropoulos O."/>
            <person name="Pellenz S."/>
            <person name="Potier S."/>
            <person name="Richard G.-F."/>
            <person name="Straub M.-L."/>
            <person name="Suleau A."/>
            <person name="Swennen D."/>
            <person name="Tekaia F."/>
            <person name="Wesolowski-Louvel M."/>
            <person name="Westhof E."/>
            <person name="Wirth B."/>
            <person name="Zeniou-Meyer M."/>
            <person name="Zivanovic Y."/>
            <person name="Bolotin-Fukuhara M."/>
            <person name="Thierry A."/>
            <person name="Bouchier C."/>
            <person name="Caudron B."/>
            <person name="Scarpelli C."/>
            <person name="Gaillardin C."/>
            <person name="Weissenbach J."/>
            <person name="Wincker P."/>
            <person name="Souciet J.-L."/>
        </authorList>
    </citation>
    <scope>NUCLEOTIDE SEQUENCE [LARGE SCALE GENOMIC DNA]</scope>
    <source>
        <strain>ATCC 2001 / BCRC 20586 / JCM 3761 / NBRC 0622 / NRRL Y-65 / CBS 138</strain>
    </source>
</reference>
<reference key="4">
    <citation type="journal article" date="2003" name="Infect. Immun.">
        <title>Phenotypic switching and mating type switching of Candida glabrata at sites of colonization.</title>
        <authorList>
            <person name="Brockert P.J."/>
            <person name="Lachke S.A."/>
            <person name="Srikantha T."/>
            <person name="Pujol C."/>
            <person name="Galask R."/>
            <person name="Soll D.R."/>
        </authorList>
    </citation>
    <scope>DEVELOPMENTAL STAGE</scope>
</reference>
<accession>Q708A7</accession>
<accession>Q6FVP2</accession>
<keyword id="KW-0238">DNA-binding</keyword>
<keyword id="KW-0371">Homeobox</keyword>
<keyword id="KW-0539">Nucleus</keyword>
<keyword id="KW-1185">Reference proteome</keyword>
<keyword id="KW-0804">Transcription</keyword>
<keyword id="KW-0805">Transcription regulation</keyword>
<dbReference type="EMBL" id="AY191461">
    <property type="status" value="NOT_ANNOTATED_CDS"/>
    <property type="molecule type" value="Genomic_DNA"/>
</dbReference>
<dbReference type="EMBL" id="AY191462">
    <property type="status" value="NOT_ANNOTATED_CDS"/>
    <property type="molecule type" value="Genomic_DNA"/>
</dbReference>
<dbReference type="EMBL" id="AJ617301">
    <property type="protein sequence ID" value="CAE84398.1"/>
    <property type="status" value="ALT_INIT"/>
    <property type="molecule type" value="Genomic_DNA"/>
</dbReference>
<dbReference type="EMBL" id="CR380951">
    <property type="protein sequence ID" value="CAG58621.1"/>
    <property type="molecule type" value="Genomic_DNA"/>
</dbReference>
<dbReference type="SMR" id="Q708A7"/>
<dbReference type="FunCoup" id="Q708A7">
    <property type="interactions" value="220"/>
</dbReference>
<dbReference type="EnsemblFungi" id="CAGL0E00341g-T">
    <property type="protein sequence ID" value="CAGL0E00341g-T-p1"/>
    <property type="gene ID" value="CAGL0E00341g"/>
</dbReference>
<dbReference type="KEGG" id="cgr:2887541"/>
<dbReference type="CGD" id="CAL0128822">
    <property type="gene designation" value="MTL1a"/>
</dbReference>
<dbReference type="VEuPathDB" id="FungiDB:CAGL0E00341g"/>
<dbReference type="HOGENOM" id="CLU_1937881_0_0_1"/>
<dbReference type="InParanoid" id="Q708A7"/>
<dbReference type="Proteomes" id="UP000002428">
    <property type="component" value="Chromosome E"/>
</dbReference>
<dbReference type="GO" id="GO:0005634">
    <property type="term" value="C:nucleus"/>
    <property type="evidence" value="ECO:0007669"/>
    <property type="project" value="UniProtKB-SubCell"/>
</dbReference>
<dbReference type="GO" id="GO:0003677">
    <property type="term" value="F:DNA binding"/>
    <property type="evidence" value="ECO:0007669"/>
    <property type="project" value="UniProtKB-KW"/>
</dbReference>
<dbReference type="GO" id="GO:0000981">
    <property type="term" value="F:DNA-binding transcription factor activity, RNA polymerase II-specific"/>
    <property type="evidence" value="ECO:0007669"/>
    <property type="project" value="InterPro"/>
</dbReference>
<dbReference type="CDD" id="cd00086">
    <property type="entry name" value="homeodomain"/>
    <property type="match status" value="1"/>
</dbReference>
<dbReference type="Gene3D" id="1.10.10.60">
    <property type="entry name" value="Homeodomain-like"/>
    <property type="match status" value="1"/>
</dbReference>
<dbReference type="InterPro" id="IPR001356">
    <property type="entry name" value="HD"/>
</dbReference>
<dbReference type="InterPro" id="IPR017970">
    <property type="entry name" value="Homeobox_CS"/>
</dbReference>
<dbReference type="InterPro" id="IPR009057">
    <property type="entry name" value="Homeodomain-like_sf"/>
</dbReference>
<dbReference type="Pfam" id="PF00046">
    <property type="entry name" value="Homeodomain"/>
    <property type="match status" value="1"/>
</dbReference>
<dbReference type="SMART" id="SM00389">
    <property type="entry name" value="HOX"/>
    <property type="match status" value="1"/>
</dbReference>
<dbReference type="SUPFAM" id="SSF46689">
    <property type="entry name" value="Homeodomain-like"/>
    <property type="match status" value="1"/>
</dbReference>
<dbReference type="PROSITE" id="PS00027">
    <property type="entry name" value="HOMEOBOX_1"/>
    <property type="match status" value="1"/>
</dbReference>
<dbReference type="PROSITE" id="PS50071">
    <property type="entry name" value="HOMEOBOX_2"/>
    <property type="match status" value="1"/>
</dbReference>
<name>MATA1_CANGA</name>
<comment type="function">
    <text>Mating type proteins are sequence specific DNA-binding proteins that act as master switches in yeast differentiation by controlling gene expression in a cell type-specific fashion.</text>
</comment>
<comment type="subcellular location">
    <subcellularLocation>
        <location evidence="1">Nucleus</location>
    </subcellularLocation>
</comment>
<comment type="developmental stage">
    <text evidence="2">Only present in a-cells (classes I and IV).</text>
</comment>
<comment type="miscellaneous">
    <text>There are three genetic loci for mating type genes in C.glabrata. MTL1 seems to be the expression locus that determines the mating type of the cell, whereas MTL2 (containing MTL2A1) and MTL3 (containing MTL3ALPHA1 and MTL3ALPHA2) appear to represent silenced repositories of mating type information.</text>
</comment>
<comment type="miscellaneous">
    <text>Haploid C.glabrata strains can switch mating type, however, neither mating nor diploid forms of C.glabrata have been observed so far.</text>
</comment>
<comment type="similarity">
    <text evidence="3">Belongs to the MATA1 family.</text>
</comment>
<comment type="caution">
    <text evidence="3">It is uncertain whether Met-1 or Met-2 is the initiator.</text>
</comment>
<comment type="sequence caution" evidence="3">
    <conflict type="erroneous initiation">
        <sequence resource="EMBL-CDS" id="CAE84398"/>
    </conflict>
</comment>